<feature type="chain" id="PRO_0000373915" description="Protein arginine N-methyltransferase 7">
    <location>
        <begin position="1"/>
        <end position="698"/>
    </location>
</feature>
<feature type="domain" description="SAM-dependent MTase PRMT-type 1" evidence="2">
    <location>
        <begin position="14"/>
        <end position="357"/>
    </location>
</feature>
<feature type="domain" description="SAM-dependent MTase PRMT-type 2" evidence="2">
    <location>
        <begin position="366"/>
        <end position="698"/>
    </location>
</feature>
<dbReference type="EC" id="2.1.1.-"/>
<dbReference type="EMBL" id="CH933808">
    <property type="protein sequence ID" value="EDW10515.1"/>
    <property type="molecule type" value="Genomic_DNA"/>
</dbReference>
<dbReference type="RefSeq" id="XP_002006580.1">
    <property type="nucleotide sequence ID" value="XM_002006544.2"/>
</dbReference>
<dbReference type="RefSeq" id="XP_015019889.1">
    <property type="nucleotide sequence ID" value="XM_015164403.1"/>
</dbReference>
<dbReference type="SMR" id="B4KSL6"/>
<dbReference type="FunCoup" id="B4KSL6">
    <property type="interactions" value="2072"/>
</dbReference>
<dbReference type="EnsemblMetazoa" id="FBtr0171864">
    <property type="protein sequence ID" value="FBpp0170356"/>
    <property type="gene ID" value="FBgn0143871"/>
</dbReference>
<dbReference type="EnsemblMetazoa" id="FBtr0422443">
    <property type="protein sequence ID" value="FBpp0380492"/>
    <property type="gene ID" value="FBgn0143871"/>
</dbReference>
<dbReference type="EnsemblMetazoa" id="FBtr0424994">
    <property type="protein sequence ID" value="FBpp0382787"/>
    <property type="gene ID" value="FBgn0143871"/>
</dbReference>
<dbReference type="EnsemblMetazoa" id="XM_015164404.3">
    <property type="protein sequence ID" value="XP_015019890.1"/>
    <property type="gene ID" value="LOC6580777"/>
</dbReference>
<dbReference type="GeneID" id="6580777"/>
<dbReference type="KEGG" id="dmo:Dmoj_GI21139"/>
<dbReference type="CTD" id="37664"/>
<dbReference type="eggNOG" id="KOG1501">
    <property type="taxonomic scope" value="Eukaryota"/>
</dbReference>
<dbReference type="HOGENOM" id="CLU_015180_0_0_1"/>
<dbReference type="InParanoid" id="B4KSL6"/>
<dbReference type="OMA" id="CHHDEYS"/>
<dbReference type="OrthoDB" id="412876at2759"/>
<dbReference type="PhylomeDB" id="B4KSL6"/>
<dbReference type="Proteomes" id="UP000009192">
    <property type="component" value="Unassembled WGS sequence"/>
</dbReference>
<dbReference type="GO" id="GO:0042054">
    <property type="term" value="F:histone methyltransferase activity"/>
    <property type="evidence" value="ECO:0007669"/>
    <property type="project" value="TreeGrafter"/>
</dbReference>
<dbReference type="GO" id="GO:0035243">
    <property type="term" value="F:protein-arginine omega-N symmetric methyltransferase activity"/>
    <property type="evidence" value="ECO:0000250"/>
    <property type="project" value="UniProtKB"/>
</dbReference>
<dbReference type="GO" id="GO:0018216">
    <property type="term" value="P:peptidyl-arginine methylation"/>
    <property type="evidence" value="ECO:0000250"/>
    <property type="project" value="UniProtKB"/>
</dbReference>
<dbReference type="CDD" id="cd02440">
    <property type="entry name" value="AdoMet_MTases"/>
    <property type="match status" value="1"/>
</dbReference>
<dbReference type="FunFam" id="2.70.160.11:FF:000014">
    <property type="entry name" value="Protein arginine N-methyltransferase 7"/>
    <property type="match status" value="1"/>
</dbReference>
<dbReference type="FunFam" id="2.70.160.11:FF:000019">
    <property type="entry name" value="Protein arginine N-methyltransferase 7"/>
    <property type="match status" value="1"/>
</dbReference>
<dbReference type="FunFam" id="3.40.50.150:FF:000070">
    <property type="entry name" value="Protein arginine N-methyltransferase 7"/>
    <property type="match status" value="1"/>
</dbReference>
<dbReference type="FunFam" id="3.40.50.150:FF:000071">
    <property type="entry name" value="Protein arginine N-methyltransferase 7"/>
    <property type="match status" value="1"/>
</dbReference>
<dbReference type="Gene3D" id="2.70.160.11">
    <property type="entry name" value="Hnrnp arginine n-methyltransferase1"/>
    <property type="match status" value="2"/>
</dbReference>
<dbReference type="Gene3D" id="3.40.50.150">
    <property type="entry name" value="Vaccinia Virus protein VP39"/>
    <property type="match status" value="2"/>
</dbReference>
<dbReference type="InterPro" id="IPR025799">
    <property type="entry name" value="Arg_MeTrfase"/>
</dbReference>
<dbReference type="InterPro" id="IPR014644">
    <property type="entry name" value="MeTrfase_PRMT7"/>
</dbReference>
<dbReference type="InterPro" id="IPR055135">
    <property type="entry name" value="PRMT_dom"/>
</dbReference>
<dbReference type="InterPro" id="IPR029063">
    <property type="entry name" value="SAM-dependent_MTases_sf"/>
</dbReference>
<dbReference type="PANTHER" id="PTHR11006">
    <property type="entry name" value="PROTEIN ARGININE N-METHYLTRANSFERASE"/>
    <property type="match status" value="1"/>
</dbReference>
<dbReference type="PANTHER" id="PTHR11006:SF4">
    <property type="entry name" value="PROTEIN ARGININE N-METHYLTRANSFERASE 7"/>
    <property type="match status" value="1"/>
</dbReference>
<dbReference type="Pfam" id="PF06325">
    <property type="entry name" value="PrmA"/>
    <property type="match status" value="1"/>
</dbReference>
<dbReference type="Pfam" id="PF22528">
    <property type="entry name" value="PRMT_C"/>
    <property type="match status" value="2"/>
</dbReference>
<dbReference type="PIRSF" id="PIRSF036946">
    <property type="entry name" value="Arg_N-mtase"/>
    <property type="match status" value="1"/>
</dbReference>
<dbReference type="SUPFAM" id="SSF53335">
    <property type="entry name" value="S-adenosyl-L-methionine-dependent methyltransferases"/>
    <property type="match status" value="2"/>
</dbReference>
<dbReference type="PROSITE" id="PS51678">
    <property type="entry name" value="SAM_MT_PRMT"/>
    <property type="match status" value="2"/>
</dbReference>
<protein>
    <recommendedName>
        <fullName>Protein arginine N-methyltransferase 7</fullName>
        <ecNumber>2.1.1.-</ecNumber>
    </recommendedName>
</protein>
<evidence type="ECO:0000250" key="1"/>
<evidence type="ECO:0000255" key="2">
    <source>
        <dbReference type="PROSITE-ProRule" id="PRU01015"/>
    </source>
</evidence>
<keyword id="KW-0489">Methyltransferase</keyword>
<keyword id="KW-1185">Reference proteome</keyword>
<keyword id="KW-0677">Repeat</keyword>
<keyword id="KW-0949">S-adenosyl-L-methionine</keyword>
<keyword id="KW-0808">Transferase</keyword>
<proteinExistence type="inferred from homology"/>
<gene>
    <name type="primary">Art7</name>
    <name type="ORF">GI21139</name>
</gene>
<comment type="function">
    <text evidence="1">Essential arginine methyltransferase that can both catalyze the formation of omega-N monomethylarginine (MMA) and symmetrical dimethylarginine (sDMA). Specifically mediates the symmetrical dimethylation of arginine residues in the small nuclear ribonucleoproteins SmD1 and SmD3 (By similarity).</text>
</comment>
<comment type="similarity">
    <text evidence="2">Belongs to the class I-like SAM-binding methyltransferase superfamily. Protein arginine N-methyltransferase family. PRMT7 subfamily.</text>
</comment>
<organism>
    <name type="scientific">Drosophila mojavensis</name>
    <name type="common">Fruit fly</name>
    <dbReference type="NCBI Taxonomy" id="7230"/>
    <lineage>
        <taxon>Eukaryota</taxon>
        <taxon>Metazoa</taxon>
        <taxon>Ecdysozoa</taxon>
        <taxon>Arthropoda</taxon>
        <taxon>Hexapoda</taxon>
        <taxon>Insecta</taxon>
        <taxon>Pterygota</taxon>
        <taxon>Neoptera</taxon>
        <taxon>Endopterygota</taxon>
        <taxon>Diptera</taxon>
        <taxon>Brachycera</taxon>
        <taxon>Muscomorpha</taxon>
        <taxon>Ephydroidea</taxon>
        <taxon>Drosophilidae</taxon>
        <taxon>Drosophila</taxon>
    </lineage>
</organism>
<accession>B4KSL6</accession>
<reference key="1">
    <citation type="journal article" date="2007" name="Nature">
        <title>Evolution of genes and genomes on the Drosophila phylogeny.</title>
        <authorList>
            <consortium name="Drosophila 12 genomes consortium"/>
        </authorList>
    </citation>
    <scope>NUCLEOTIDE SEQUENCE [LARGE SCALE GENOMIC DNA]</scope>
    <source>
        <strain>Tucson 15081-1352.22</strain>
    </source>
</reference>
<sequence>MASFAQVINPMTGQNTWQERGDDYDYHQEVANAGFGDMLHDWERNQKYDAAIRKTIAGMRQAGKQVHVLDIGTGTGILAMMALRAGADTVTACEAFVPMANCAARILAANDAAHVRLIRKRSTDIVMGVDMPHRANLLVAELLDTELIGEGAIGIYNHAHEELLTDDALCIPARATCYAQVAQSPLASQWNSLKILPDLDGDILLRPPTQLLQCSGEAALHDVQLSQLPPHSFHVLSEPTQIFHFDFQRKQPLELMRENVVRVQLSRPGSVELVFYWWQIELDDAGEQLLSCAPYWAHPELEQLKATCKDKQRPLANIVPWRDHWMQAIYYIPKALHLHDAGEEFWLRCYHDEYSLWFDAHKEQPEKPARRHSCTCDLHMTYTRNRIGQLNQSIRNKRYLAYLEQAVQSKSAHVLVMGDGCLLGLASAALGAASVYCLEPHRFSRRLLESVVKHNQLKNVKFLDSLKQLEPNELDTITHIFAEPYFLNSILPWDNFYFGTLLLQLEQLHQKLPANVEISPCAARIFALPVEFLDLHKIRAPIVSCEGFDLRLFDDMVQRSAEQALSQVEAQPLWEYPCRALAQPQQLLSVDFANFGVEQSNHGSIKLTAEGNCNGIALWVDWQLSPNENPKSIVSSGPLEPVETGQYVKWDMFVRQGVHFINQTTAEKKYLNWSTQFRPLLGELNFNFSLNANREKSE</sequence>
<name>ANM7_DROMO</name>